<evidence type="ECO:0000250" key="1"/>
<evidence type="ECO:0000255" key="2">
    <source>
        <dbReference type="HAMAP-Rule" id="MF_01344"/>
    </source>
</evidence>
<geneLocation type="chloroplast"/>
<comment type="function">
    <text evidence="2">Component of the cytochrome b6-f complex, which mediates electron transfer between photosystem II (PSII) and photosystem I (PSI), cyclic electron flow around PSI, and state transitions.</text>
</comment>
<comment type="subunit">
    <text evidence="1">The 4 large subunits of the cytochrome b6-f complex are cytochrome b6, subunit IV (17 kDa polypeptide, petD), cytochrome f and the Rieske protein, while the 4 small subunits are petG, petL, petM and petN. The complex functions as a dimer (By similarity).</text>
</comment>
<comment type="subcellular location">
    <subcellularLocation>
        <location evidence="2">Plastid</location>
        <location evidence="2">Chloroplast thylakoid membrane</location>
        <topology evidence="2">Multi-pass membrane protein</topology>
    </subcellularLocation>
</comment>
<comment type="similarity">
    <text evidence="2">Belongs to the cytochrome b family. PetD subfamily.</text>
</comment>
<proteinExistence type="inferred from homology"/>
<organism>
    <name type="scientific">Stigeoclonium helveticum</name>
    <name type="common">Green alga</name>
    <dbReference type="NCBI Taxonomy" id="55999"/>
    <lineage>
        <taxon>Eukaryota</taxon>
        <taxon>Viridiplantae</taxon>
        <taxon>Chlorophyta</taxon>
        <taxon>core chlorophytes</taxon>
        <taxon>Chlorophyceae</taxon>
        <taxon>OCC clade</taxon>
        <taxon>Chaetophorales</taxon>
        <taxon>Chaetophoraceae</taxon>
        <taxon>Stigeoclonium</taxon>
    </lineage>
</organism>
<reference key="1">
    <citation type="journal article" date="2006" name="Mol. Genet. Genomics">
        <title>Distinctive architecture of the chloroplast genome in the chlorophycean green alga Stigeoclonium helveticum.</title>
        <authorList>
            <person name="Belanger A.-S."/>
            <person name="Brouard J.-S."/>
            <person name="Charlebois P."/>
            <person name="Otis C."/>
            <person name="Lemieux C."/>
            <person name="Turmel M."/>
        </authorList>
    </citation>
    <scope>NUCLEOTIDE SEQUENCE [LARGE SCALE GENOMIC DNA]</scope>
    <source>
        <strain>UTEX 441</strain>
    </source>
</reference>
<sequence length="160" mass="17599">MAVIKKPDLSDPVLKMKLAKGMGHNYYGEPAWPNDLLYIFPVCIFGTFAIVIGLSVMEPAAMGEPANPFATPLEILPEWYFYPVFQLLRVIPNKLLGVLLMAAVPAGLLTVPFIENINKFQNPFRRPIATTVFLLGTVVAVYLGIGSTFPIDQSLTLGLF</sequence>
<gene>
    <name evidence="2" type="primary">petD</name>
</gene>
<dbReference type="EMBL" id="DQ630521">
    <property type="protein sequence ID" value="ABF60209.1"/>
    <property type="molecule type" value="Genomic_DNA"/>
</dbReference>
<dbReference type="RefSeq" id="YP_764364.1">
    <property type="nucleotide sequence ID" value="NC_008372.1"/>
</dbReference>
<dbReference type="SMR" id="Q06SK2"/>
<dbReference type="GeneID" id="4308349"/>
<dbReference type="GO" id="GO:0009535">
    <property type="term" value="C:chloroplast thylakoid membrane"/>
    <property type="evidence" value="ECO:0007669"/>
    <property type="project" value="UniProtKB-SubCell"/>
</dbReference>
<dbReference type="GO" id="GO:0005739">
    <property type="term" value="C:mitochondrion"/>
    <property type="evidence" value="ECO:0007669"/>
    <property type="project" value="GOC"/>
</dbReference>
<dbReference type="GO" id="GO:0045158">
    <property type="term" value="F:electron transporter, transferring electrons within cytochrome b6/f complex of photosystem II activity"/>
    <property type="evidence" value="ECO:0007669"/>
    <property type="project" value="UniProtKB-UniRule"/>
</dbReference>
<dbReference type="GO" id="GO:0045156">
    <property type="term" value="F:electron transporter, transferring electrons within the cyclic electron transport pathway of photosynthesis activity"/>
    <property type="evidence" value="ECO:0007669"/>
    <property type="project" value="InterPro"/>
</dbReference>
<dbReference type="GO" id="GO:0008121">
    <property type="term" value="F:ubiquinol-cytochrome-c reductase activity"/>
    <property type="evidence" value="ECO:0007669"/>
    <property type="project" value="TreeGrafter"/>
</dbReference>
<dbReference type="GO" id="GO:0006122">
    <property type="term" value="P:mitochondrial electron transport, ubiquinol to cytochrome c"/>
    <property type="evidence" value="ECO:0007669"/>
    <property type="project" value="TreeGrafter"/>
</dbReference>
<dbReference type="GO" id="GO:0009767">
    <property type="term" value="P:photosynthetic electron transport chain"/>
    <property type="evidence" value="ECO:0007669"/>
    <property type="project" value="InterPro"/>
</dbReference>
<dbReference type="CDD" id="cd00290">
    <property type="entry name" value="cytochrome_b_C"/>
    <property type="match status" value="1"/>
</dbReference>
<dbReference type="FunFam" id="1.10.287.980:FF:000001">
    <property type="entry name" value="Cytochrome b6-f complex subunit 4"/>
    <property type="match status" value="1"/>
</dbReference>
<dbReference type="FunFam" id="1.20.5.510:FF:000002">
    <property type="entry name" value="Cytochrome b6-f complex subunit 4"/>
    <property type="match status" value="1"/>
</dbReference>
<dbReference type="Gene3D" id="1.10.287.980">
    <property type="entry name" value="plastocyanin oxidoreductase"/>
    <property type="match status" value="1"/>
</dbReference>
<dbReference type="Gene3D" id="1.20.5.510">
    <property type="entry name" value="Single helix bin"/>
    <property type="match status" value="1"/>
</dbReference>
<dbReference type="HAMAP" id="MF_01344">
    <property type="entry name" value="Cytb6_f_subIV"/>
    <property type="match status" value="1"/>
</dbReference>
<dbReference type="InterPro" id="IPR005798">
    <property type="entry name" value="Cyt_b/b6_C"/>
</dbReference>
<dbReference type="InterPro" id="IPR036150">
    <property type="entry name" value="Cyt_b/b6_C_sf"/>
</dbReference>
<dbReference type="InterPro" id="IPR005870">
    <property type="entry name" value="Cyt_b6/f_cplx_suIV"/>
</dbReference>
<dbReference type="InterPro" id="IPR048260">
    <property type="entry name" value="Cytochrome_b_C_euk/bac"/>
</dbReference>
<dbReference type="NCBIfam" id="TIGR01156">
    <property type="entry name" value="cytb6_f_IV"/>
    <property type="match status" value="1"/>
</dbReference>
<dbReference type="PANTHER" id="PTHR19271">
    <property type="entry name" value="CYTOCHROME B"/>
    <property type="match status" value="1"/>
</dbReference>
<dbReference type="PANTHER" id="PTHR19271:SF41">
    <property type="entry name" value="CYTOCHROME B_B6 C-TERMINAL REGION PROFILE DOMAIN-CONTAINING PROTEIN"/>
    <property type="match status" value="1"/>
</dbReference>
<dbReference type="Pfam" id="PF00032">
    <property type="entry name" value="Cytochrom_B_C"/>
    <property type="match status" value="1"/>
</dbReference>
<dbReference type="PIRSF" id="PIRSF000033">
    <property type="entry name" value="B6f_17K"/>
    <property type="match status" value="1"/>
</dbReference>
<dbReference type="SUPFAM" id="SSF81648">
    <property type="entry name" value="a domain/subunit of cytochrome bc1 complex (Ubiquinol-cytochrome c reductase)"/>
    <property type="match status" value="1"/>
</dbReference>
<dbReference type="PROSITE" id="PS51003">
    <property type="entry name" value="CYTB_CTER"/>
    <property type="match status" value="1"/>
</dbReference>
<accession>Q06SK2</accession>
<protein>
    <recommendedName>
        <fullName evidence="2">Cytochrome b6-f complex subunit 4</fullName>
    </recommendedName>
    <alternativeName>
        <fullName evidence="2">17 kDa polypeptide</fullName>
    </alternativeName>
</protein>
<feature type="chain" id="PRO_0000276545" description="Cytochrome b6-f complex subunit 4">
    <location>
        <begin position="1"/>
        <end position="160"/>
    </location>
</feature>
<feature type="transmembrane region" description="Helical" evidence="2">
    <location>
        <begin position="36"/>
        <end position="56"/>
    </location>
</feature>
<feature type="transmembrane region" description="Helical" evidence="2">
    <location>
        <begin position="95"/>
        <end position="115"/>
    </location>
</feature>
<feature type="transmembrane region" description="Helical" evidence="2">
    <location>
        <begin position="131"/>
        <end position="151"/>
    </location>
</feature>
<name>PETD_STIHE</name>
<keyword id="KW-0150">Chloroplast</keyword>
<keyword id="KW-0249">Electron transport</keyword>
<keyword id="KW-0472">Membrane</keyword>
<keyword id="KW-0602">Photosynthesis</keyword>
<keyword id="KW-0934">Plastid</keyword>
<keyword id="KW-0793">Thylakoid</keyword>
<keyword id="KW-0812">Transmembrane</keyword>
<keyword id="KW-1133">Transmembrane helix</keyword>
<keyword id="KW-0813">Transport</keyword>